<keyword id="KW-0007">Acetylation</keyword>
<keyword id="KW-0101">Branched-chain amino acid catabolism</keyword>
<keyword id="KW-0963">Cytoplasm</keyword>
<keyword id="KW-0210">Decarboxylase</keyword>
<keyword id="KW-1017">Isopeptide bond</keyword>
<keyword id="KW-0456">Lyase</keyword>
<keyword id="KW-0460">Magnesium</keyword>
<keyword id="KW-0479">Metal-binding</keyword>
<keyword id="KW-0585">Phenylalanine catabolism</keyword>
<keyword id="KW-0597">Phosphoprotein</keyword>
<keyword id="KW-1185">Reference proteome</keyword>
<keyword id="KW-0786">Thiamine pyrophosphate</keyword>
<keyword id="KW-0823">Tryptophan catabolism</keyword>
<keyword id="KW-0832">Ubl conjugation</keyword>
<evidence type="ECO:0000250" key="1"/>
<evidence type="ECO:0000250" key="2">
    <source>
        <dbReference type="UniProtKB" id="P06169"/>
    </source>
</evidence>
<evidence type="ECO:0000269" key="3">
    <source>
    </source>
</evidence>
<evidence type="ECO:0000269" key="4">
    <source>
    </source>
</evidence>
<evidence type="ECO:0000269" key="5">
    <source>
    </source>
</evidence>
<evidence type="ECO:0000269" key="6">
    <source>
    </source>
</evidence>
<evidence type="ECO:0000269" key="7">
    <source>
    </source>
</evidence>
<evidence type="ECO:0000269" key="8">
    <source>
    </source>
</evidence>
<evidence type="ECO:0000269" key="9">
    <source>
    </source>
</evidence>
<evidence type="ECO:0000269" key="10">
    <source>
    </source>
</evidence>
<evidence type="ECO:0000269" key="11">
    <source>
    </source>
</evidence>
<evidence type="ECO:0000269" key="12">
    <source>
    </source>
</evidence>
<evidence type="ECO:0000269" key="13">
    <source>
    </source>
</evidence>
<evidence type="ECO:0000269" key="14">
    <source>
    </source>
</evidence>
<evidence type="ECO:0000269" key="15">
    <source>
    </source>
</evidence>
<evidence type="ECO:0000305" key="16"/>
<evidence type="ECO:0000305" key="17">
    <source>
    </source>
</evidence>
<reference key="1">
    <citation type="journal article" date="1991" name="J. Bacteriol.">
        <title>Characterization of PDC6, a third structural gene for pyruvate decarboxylase in Saccharomyces cerevisiae.</title>
        <authorList>
            <person name="Hohmann S."/>
        </authorList>
    </citation>
    <scope>NUCLEOTIDE SEQUENCE [GENOMIC DNA]</scope>
    <scope>EXPRESSION LEVEL</scope>
</reference>
<reference key="2">
    <citation type="journal article" date="1997" name="Nature">
        <title>The nucleotide sequence of Saccharomyces cerevisiae chromosome VII.</title>
        <authorList>
            <person name="Tettelin H."/>
            <person name="Agostoni-Carbone M.L."/>
            <person name="Albermann K."/>
            <person name="Albers M."/>
            <person name="Arroyo J."/>
            <person name="Backes U."/>
            <person name="Barreiros T."/>
            <person name="Bertani I."/>
            <person name="Bjourson A.J."/>
            <person name="Brueckner M."/>
            <person name="Bruschi C.V."/>
            <person name="Carignani G."/>
            <person name="Castagnoli L."/>
            <person name="Cerdan E."/>
            <person name="Clemente M.L."/>
            <person name="Coblenz A."/>
            <person name="Coglievina M."/>
            <person name="Coissac E."/>
            <person name="Defoor E."/>
            <person name="Del Bino S."/>
            <person name="Delius H."/>
            <person name="Delneri D."/>
            <person name="de Wergifosse P."/>
            <person name="Dujon B."/>
            <person name="Durand P."/>
            <person name="Entian K.-D."/>
            <person name="Eraso P."/>
            <person name="Escribano V."/>
            <person name="Fabiani L."/>
            <person name="Fartmann B."/>
            <person name="Feroli F."/>
            <person name="Feuermann M."/>
            <person name="Frontali L."/>
            <person name="Garcia-Gonzalez M."/>
            <person name="Garcia-Saez M.I."/>
            <person name="Goffeau A."/>
            <person name="Guerreiro P."/>
            <person name="Hani J."/>
            <person name="Hansen M."/>
            <person name="Hebling U."/>
            <person name="Hernandez K."/>
            <person name="Heumann K."/>
            <person name="Hilger F."/>
            <person name="Hofmann B."/>
            <person name="Indge K.J."/>
            <person name="James C.M."/>
            <person name="Klima R."/>
            <person name="Koetter P."/>
            <person name="Kramer B."/>
            <person name="Kramer W."/>
            <person name="Lauquin G."/>
            <person name="Leuther H."/>
            <person name="Louis E.J."/>
            <person name="Maillier E."/>
            <person name="Marconi A."/>
            <person name="Martegani E."/>
            <person name="Mazon M.J."/>
            <person name="Mazzoni C."/>
            <person name="McReynolds A.D.K."/>
            <person name="Melchioretto P."/>
            <person name="Mewes H.-W."/>
            <person name="Minenkova O."/>
            <person name="Mueller-Auer S."/>
            <person name="Nawrocki A."/>
            <person name="Netter P."/>
            <person name="Neu R."/>
            <person name="Nombela C."/>
            <person name="Oliver S.G."/>
            <person name="Panzeri L."/>
            <person name="Paoluzi S."/>
            <person name="Plevani P."/>
            <person name="Portetelle D."/>
            <person name="Portillo F."/>
            <person name="Potier S."/>
            <person name="Purnelle B."/>
            <person name="Rieger M."/>
            <person name="Riles L."/>
            <person name="Rinaldi T."/>
            <person name="Robben J."/>
            <person name="Rodrigues-Pousada C."/>
            <person name="Rodriguez-Belmonte E."/>
            <person name="Rodriguez-Torres A.M."/>
            <person name="Rose M."/>
            <person name="Ruzzi M."/>
            <person name="Saliola M."/>
            <person name="Sanchez-Perez M."/>
            <person name="Schaefer B."/>
            <person name="Schaefer M."/>
            <person name="Scharfe M."/>
            <person name="Schmidheini T."/>
            <person name="Schreer A."/>
            <person name="Skala J."/>
            <person name="Souciet J.-L."/>
            <person name="Steensma H.Y."/>
            <person name="Talla E."/>
            <person name="Thierry A."/>
            <person name="Vandenbol M."/>
            <person name="van der Aart Q.J.M."/>
            <person name="Van Dyck L."/>
            <person name="Vanoni M."/>
            <person name="Verhasselt P."/>
            <person name="Voet M."/>
            <person name="Volckaert G."/>
            <person name="Wambutt R."/>
            <person name="Watson M.D."/>
            <person name="Weber N."/>
            <person name="Wedler E."/>
            <person name="Wedler H."/>
            <person name="Wipfli P."/>
            <person name="Wolf K."/>
            <person name="Wright L.F."/>
            <person name="Zaccaria P."/>
            <person name="Zimmermann M."/>
            <person name="Zollner A."/>
            <person name="Kleine K."/>
        </authorList>
    </citation>
    <scope>NUCLEOTIDE SEQUENCE [LARGE SCALE GENOMIC DNA]</scope>
    <source>
        <strain>ATCC 204508 / S288c</strain>
    </source>
</reference>
<reference key="3">
    <citation type="journal article" date="2014" name="G3 (Bethesda)">
        <title>The reference genome sequence of Saccharomyces cerevisiae: Then and now.</title>
        <authorList>
            <person name="Engel S.R."/>
            <person name="Dietrich F.S."/>
            <person name="Fisk D.G."/>
            <person name="Binkley G."/>
            <person name="Balakrishnan R."/>
            <person name="Costanzo M.C."/>
            <person name="Dwight S.S."/>
            <person name="Hitz B.C."/>
            <person name="Karra K."/>
            <person name="Nash R.S."/>
            <person name="Weng S."/>
            <person name="Wong E.D."/>
            <person name="Lloyd P."/>
            <person name="Skrzypek M.S."/>
            <person name="Miyasato S.R."/>
            <person name="Simison M."/>
            <person name="Cherry J.M."/>
        </authorList>
    </citation>
    <scope>GENOME REANNOTATION</scope>
    <source>
        <strain>ATCC 204508 / S288c</strain>
    </source>
</reference>
<reference key="4">
    <citation type="submission" date="1992-04" db="EMBL/GenBank/DDBJ databases">
        <authorList>
            <person name="Hohmann S."/>
        </authorList>
    </citation>
    <scope>NUCLEOTIDE SEQUENCE [GENOMIC DNA] OF 1-159</scope>
</reference>
<reference key="5">
    <citation type="journal article" date="1984" name="Biochemistry">
        <title>Brewers' yeast pyruvate decarboxylase produces acetoin from acetaldehyde: a novel tool to study the mechanism of steps subsequent to carbon dioxide loss.</title>
        <authorList>
            <person name="Chen G.C."/>
            <person name="Jordan F."/>
        </authorList>
    </citation>
    <scope>FUNCTION</scope>
</reference>
<reference key="6">
    <citation type="journal article" date="1997" name="J. Biol. Chem.">
        <title>A 13C nuclear magnetic resonance investigation of the metabolism of leucine to isoamyl alcohol in Saccharomyces cerevisiae.</title>
        <authorList>
            <person name="Dickinson J.R."/>
            <person name="Lanterman M.M."/>
            <person name="Danner D.J."/>
            <person name="Pearson B.M."/>
            <person name="Sanz P."/>
            <person name="Harrison S.J."/>
            <person name="Hewlins M.J."/>
        </authorList>
    </citation>
    <scope>ROLE IN AMINO ACID CATABOLISM</scope>
</reference>
<reference key="7">
    <citation type="journal article" date="1998" name="J. Biol. Chem.">
        <title>An investigation of the metabolism of valine to isobutyl alcohol in Saccharomyces cerevisiae.</title>
        <authorList>
            <person name="Dickinson J.R."/>
            <person name="Harrison S.J."/>
            <person name="Hewlins M.J."/>
        </authorList>
    </citation>
    <scope>ROLE IN VALINE CATABOLISM</scope>
</reference>
<reference key="8">
    <citation type="journal article" date="1999" name="FEMS Microbiol. Lett.">
        <title>Growth requirements of pyruvate-decarboxylase-negative Saccharomyces cerevisiae.</title>
        <authorList>
            <person name="Flikweert M.T."/>
            <person name="de Swaaf M."/>
            <person name="van Dijken J.P."/>
            <person name="Pronk J.T."/>
        </authorList>
    </citation>
    <scope>FUNCTION</scope>
    <scope>CYTOSOLIC ACETYL-COA PRODUCTION</scope>
</reference>
<reference key="9">
    <citation type="journal article" date="2000" name="J. Biol. Chem.">
        <title>An investigation of the metabolism of isoleucine to active Amyl alcohol in Saccharomyces cerevisiae.</title>
        <authorList>
            <person name="Dickinson J.R."/>
            <person name="Harrison S.J."/>
            <person name="Dickinson J.A."/>
            <person name="Hewlins M.J."/>
        </authorList>
    </citation>
    <scope>ROLE IN ISOLEUCINE CATABOLISM</scope>
</reference>
<reference key="10">
    <citation type="journal article" date="2000" name="J. Agric. Food Chem.">
        <title>Generation of odorous acyloins by yeast pyruvate decarboxylases and their occurrence in sherry and soy sauce.</title>
        <authorList>
            <person name="Neuser F."/>
            <person name="Zorn H."/>
            <person name="Berger R.G."/>
        </authorList>
    </citation>
    <scope>FUNCTION</scope>
    <scope>GENERATION OF ACYLOINS</scope>
</reference>
<reference key="11">
    <citation type="journal article" date="2003" name="J. Biol. Chem.">
        <title>The catabolism of amino acids to long chain and complex alcohols in Saccharomyces cerevisiae.</title>
        <authorList>
            <person name="Dickinson J.R."/>
            <person name="Salgado L.E."/>
            <person name="Hewlins M.J."/>
        </authorList>
    </citation>
    <scope>ROLE IN PHENYLALANINE; TRYPTOPHAN AND LEUCINE CATABOLISM</scope>
</reference>
<reference key="12">
    <citation type="journal article" date="2003" name="Appl. Environ. Microbiol.">
        <title>Identification and characterization of phenylpyruvate decarboxylase genes in Saccharomyces cerevisiae.</title>
        <authorList>
            <person name="Vuralhan Z."/>
            <person name="Morais M.A."/>
            <person name="Tai S.L."/>
            <person name="Piper M.D."/>
            <person name="Pronk J.T."/>
        </authorList>
    </citation>
    <scope>FUNCTION</scope>
    <scope>AROMATIC AMINO ACIDS AS NITROGEN SOURCE</scope>
</reference>
<reference key="13">
    <citation type="journal article" date="1998" name="Biochim. Biophys. Acta">
        <title>Application of alpha-keto acid decarboxylases in biotransformations.</title>
        <authorList>
            <person name="Iding H."/>
            <person name="Siegert P."/>
            <person name="Mesch K."/>
            <person name="Pohl M."/>
        </authorList>
    </citation>
    <scope>REVIEW</scope>
    <scope>BIOTECHNOLOGICAL RELEVANCE</scope>
</reference>
<reference key="14">
    <citation type="journal article" date="1998" name="Biochim. Biophys. Acta">
        <title>Thiamin metabolism and thiamin diphosphate-dependent enzymes in the yeast Saccharomyces cerevisiae: genetic regulation.</title>
        <authorList>
            <person name="Hohmann S."/>
            <person name="Meacock P.A."/>
        </authorList>
    </citation>
    <scope>REVIEW</scope>
</reference>
<reference key="15">
    <citation type="journal article" date="2003" name="Nature">
        <title>Global analysis of protein localization in budding yeast.</title>
        <authorList>
            <person name="Huh W.-K."/>
            <person name="Falvo J.V."/>
            <person name="Gerke L.C."/>
            <person name="Carroll A.S."/>
            <person name="Howson R.W."/>
            <person name="Weissman J.S."/>
            <person name="O'Shea E.K."/>
        </authorList>
    </citation>
    <scope>SUBCELLULAR LOCATION [LARGE SCALE ANALYSIS]</scope>
</reference>
<reference key="16">
    <citation type="journal article" date="2003" name="Nature">
        <title>Global analysis of protein expression in yeast.</title>
        <authorList>
            <person name="Ghaemmaghami S."/>
            <person name="Huh W.-K."/>
            <person name="Bower K."/>
            <person name="Howson R.W."/>
            <person name="Belle A."/>
            <person name="Dephoure N."/>
            <person name="O'Shea E.K."/>
            <person name="Weissman J.S."/>
        </authorList>
    </citation>
    <scope>LEVEL OF PROTEIN EXPRESSION [LARGE SCALE ANALYSIS]</scope>
</reference>
<reference key="17">
    <citation type="journal article" date="2012" name="Appl. Environ. Microbiol.">
        <title>Substrate specificity of thiamine pyrophosphate-dependent 2-oxo-acid decarboxylases in Saccharomyces cerevisiae.</title>
        <authorList>
            <person name="Romagnoli G."/>
            <person name="Luttik M.A."/>
            <person name="Koetter P."/>
            <person name="Pronk J.T."/>
            <person name="Daran J.M."/>
        </authorList>
    </citation>
    <scope>CATALYTIC ACTIVITY</scope>
    <scope>BIOPHYSICOCHEMICAL PROPERTIES</scope>
</reference>
<reference key="18">
    <citation type="journal article" date="2013" name="Biotechnol. Biofuels">
        <title>A novel pathway to produce butanol and isobutanol in Saccharomyces cerevisiae.</title>
        <authorList>
            <person name="Branduardi P."/>
            <person name="Longo V."/>
            <person name="Berterame N.M."/>
            <person name="Rossi G."/>
            <person name="Porro D."/>
        </authorList>
    </citation>
    <scope>FUNCTION IN BUTANOL PRODUCTION</scope>
</reference>
<sequence>MSEITLGKYLFERLKQVNVNTIFGLPGDFNLSLLDKIYEVDGLRWAGNANELNAAYAADGYARIKGLSVLVTTFGVGELSALNGIAGSYAEHVGVLHVVGVPSISAQAKQLLLHHTLGNGDFTVFHRMSANISETTSMITDIATAPSEIDRLIRTTFITQRPSYLGLPANLVDLKVPGSLLEKPIDLSLKPNDPEAEKEVIDTVLELIQNSKNPVILSDACASRHNVKKETQKLIDLTQFPAFVTPLGKGSIDEQHPRYGGVYVGTLSKQDVKQAVESADLILSVGALLSDFNTGSFSYSYKTKNVVEFHSDYVKVKNATFLGVQMKFALQNLLKVIPDVVKGYKSVPVPTKTPANKGVPASTPLKQEWLWNELSKFLQEGDVIISETGTSAFGINQTIFPKDAYGISQVLWGSIGFTTGATLGAAFAAEEIDPNKRVILFIGDGSLQLTVQEISTMIRWGLKPYLFVLNNDGYTIEKLIHGPHAEYNEIQTWDHLALLPAFGAKKYENHKIATTGEWDALTTDSEFQKNSVIRLIELKLPVFDAPESLIKQAQLTAATNAKQ</sequence>
<accession>P26263</accession>
<accession>D6VUL9</accession>
<organism>
    <name type="scientific">Saccharomyces cerevisiae (strain ATCC 204508 / S288c)</name>
    <name type="common">Baker's yeast</name>
    <dbReference type="NCBI Taxonomy" id="559292"/>
    <lineage>
        <taxon>Eukaryota</taxon>
        <taxon>Fungi</taxon>
        <taxon>Dikarya</taxon>
        <taxon>Ascomycota</taxon>
        <taxon>Saccharomycotina</taxon>
        <taxon>Saccharomycetes</taxon>
        <taxon>Saccharomycetales</taxon>
        <taxon>Saccharomycetaceae</taxon>
        <taxon>Saccharomyces</taxon>
    </lineage>
</organism>
<protein>
    <recommendedName>
        <fullName>Pyruvate decarboxylase isozyme 3</fullName>
        <ecNumber evidence="10 12">4.1.1.-</ecNumber>
        <ecNumber evidence="6">4.1.1.43</ecNumber>
        <ecNumber evidence="4 15">4.1.1.72</ecNumber>
        <ecNumber evidence="6">4.1.1.74</ecNumber>
    </recommendedName>
    <alternativeName>
        <fullName>Thiamine pyrophosphate-dependent 2-oxo-acid decarboxylase</fullName>
        <shortName>2ODC</shortName>
    </alternativeName>
</protein>
<gene>
    <name type="primary">PDC6</name>
    <name type="ordered locus">YGR087C</name>
</gene>
<proteinExistence type="evidence at protein level"/>
<feature type="initiator methionine" description="Removed" evidence="2">
    <location>
        <position position="1"/>
    </location>
</feature>
<feature type="chain" id="PRO_0000090772" description="Pyruvate decarboxylase isozyme 3">
    <location>
        <begin position="2"/>
        <end position="563"/>
    </location>
</feature>
<feature type="binding site" evidence="2">
    <location>
        <position position="28"/>
    </location>
    <ligand>
        <name>pyruvate</name>
        <dbReference type="ChEBI" id="CHEBI:15361"/>
        <note>ligand shared between two neighboring subunits</note>
    </ligand>
</feature>
<feature type="binding site" evidence="2">
    <location>
        <position position="115"/>
    </location>
    <ligand>
        <name>pyruvate</name>
        <dbReference type="ChEBI" id="CHEBI:15361"/>
        <note>ligand shared between two neighboring subunits</note>
    </ligand>
</feature>
<feature type="binding site" evidence="2">
    <location>
        <position position="390"/>
    </location>
    <ligand>
        <name>thiamine diphosphate</name>
        <dbReference type="ChEBI" id="CHEBI:58937"/>
    </ligand>
</feature>
<feature type="binding site" evidence="2">
    <location>
        <begin position="413"/>
        <end position="415"/>
    </location>
    <ligand>
        <name>thiamine diphosphate</name>
        <dbReference type="ChEBI" id="CHEBI:58937"/>
    </ligand>
</feature>
<feature type="binding site" evidence="2">
    <location>
        <position position="444"/>
    </location>
    <ligand>
        <name>Mg(2+)</name>
        <dbReference type="ChEBI" id="CHEBI:18420"/>
    </ligand>
</feature>
<feature type="binding site" evidence="2">
    <location>
        <begin position="445"/>
        <end position="446"/>
    </location>
    <ligand>
        <name>thiamine diphosphate</name>
        <dbReference type="ChEBI" id="CHEBI:58937"/>
    </ligand>
</feature>
<feature type="binding site" evidence="2">
    <location>
        <begin position="471"/>
        <end position="476"/>
    </location>
    <ligand>
        <name>thiamine diphosphate</name>
        <dbReference type="ChEBI" id="CHEBI:58937"/>
    </ligand>
</feature>
<feature type="binding site" evidence="2">
    <location>
        <position position="471"/>
    </location>
    <ligand>
        <name>Mg(2+)</name>
        <dbReference type="ChEBI" id="CHEBI:18420"/>
    </ligand>
</feature>
<feature type="binding site" evidence="2">
    <location>
        <position position="473"/>
    </location>
    <ligand>
        <name>Mg(2+)</name>
        <dbReference type="ChEBI" id="CHEBI:18420"/>
    </ligand>
</feature>
<feature type="binding site" evidence="2">
    <location>
        <position position="477"/>
    </location>
    <ligand>
        <name>pyruvate</name>
        <dbReference type="ChEBI" id="CHEBI:15361"/>
        <note>ligand shared between two neighboring subunits</note>
    </ligand>
</feature>
<feature type="modified residue" description="N-acetylserine" evidence="2">
    <location>
        <position position="2"/>
    </location>
</feature>
<feature type="modified residue" description="Phosphoserine" evidence="2">
    <location>
        <position position="223"/>
    </location>
</feature>
<feature type="modified residue" description="Phosphothreonine" evidence="2">
    <location>
        <position position="266"/>
    </location>
</feature>
<feature type="modified residue" description="Phosphothreonine" evidence="2">
    <location>
        <position position="353"/>
    </location>
</feature>
<feature type="modified residue" description="Phosphothreonine" evidence="2">
    <location>
        <position position="522"/>
    </location>
</feature>
<feature type="cross-link" description="Glycyl lysine isopeptide (Lys-Gly) (interchain with G-Cter in ubiquitin)" evidence="2">
    <location>
        <position position="212"/>
    </location>
</feature>
<feature type="cross-link" description="Glycyl lysine isopeptide (Lys-Gly) (interchain with G-Cter in ubiquitin)" evidence="2">
    <location>
        <position position="233"/>
    </location>
</feature>
<feature type="cross-link" description="Glycyl lysine isopeptide (Lys-Gly) (interchain with G-Cter in ubiquitin)" evidence="2">
    <location>
        <position position="269"/>
    </location>
</feature>
<feature type="cross-link" description="Glycyl lysine isopeptide (Lys-Gly) (interchain with G-Cter in ubiquitin)" evidence="2">
    <location>
        <position position="505"/>
    </location>
</feature>
<dbReference type="EC" id="4.1.1.-" evidence="10 12"/>
<dbReference type="EC" id="4.1.1.43" evidence="6"/>
<dbReference type="EC" id="4.1.1.72" evidence="4 15"/>
<dbReference type="EC" id="4.1.1.74" evidence="6"/>
<dbReference type="EMBL" id="X55905">
    <property type="protein sequence ID" value="CAA39398.1"/>
    <property type="molecule type" value="Genomic_DNA"/>
</dbReference>
<dbReference type="EMBL" id="Z72872">
    <property type="protein sequence ID" value="CAA97089.1"/>
    <property type="molecule type" value="Genomic_DNA"/>
</dbReference>
<dbReference type="EMBL" id="Z72873">
    <property type="protein sequence ID" value="CAA97091.1"/>
    <property type="molecule type" value="Genomic_DNA"/>
</dbReference>
<dbReference type="EMBL" id="X66843">
    <property type="protein sequence ID" value="CAA47319.1"/>
    <property type="molecule type" value="Genomic_DNA"/>
</dbReference>
<dbReference type="EMBL" id="BK006941">
    <property type="protein sequence ID" value="DAA08180.1"/>
    <property type="molecule type" value="Genomic_DNA"/>
</dbReference>
<dbReference type="PIR" id="S64382">
    <property type="entry name" value="S64382"/>
</dbReference>
<dbReference type="RefSeq" id="NP_011601.3">
    <property type="nucleotide sequence ID" value="NM_001181216.3"/>
</dbReference>
<dbReference type="SMR" id="P26263"/>
<dbReference type="BioGRID" id="33329">
    <property type="interactions" value="80"/>
</dbReference>
<dbReference type="DIP" id="DIP-3912N"/>
<dbReference type="FunCoup" id="P26263">
    <property type="interactions" value="577"/>
</dbReference>
<dbReference type="IntAct" id="P26263">
    <property type="interactions" value="9"/>
</dbReference>
<dbReference type="MINT" id="P26263"/>
<dbReference type="STRING" id="4932.YGR087C"/>
<dbReference type="CarbonylDB" id="P26263"/>
<dbReference type="iPTMnet" id="P26263"/>
<dbReference type="PaxDb" id="4932-YGR087C"/>
<dbReference type="PeptideAtlas" id="P26263"/>
<dbReference type="TopDownProteomics" id="P26263"/>
<dbReference type="EnsemblFungi" id="YGR087C_mRNA">
    <property type="protein sequence ID" value="YGR087C"/>
    <property type="gene ID" value="YGR087C"/>
</dbReference>
<dbReference type="GeneID" id="852978"/>
<dbReference type="KEGG" id="sce:YGR087C"/>
<dbReference type="AGR" id="SGD:S000003319"/>
<dbReference type="SGD" id="S000003319">
    <property type="gene designation" value="PDC6"/>
</dbReference>
<dbReference type="VEuPathDB" id="FungiDB:YGR087C"/>
<dbReference type="eggNOG" id="KOG1184">
    <property type="taxonomic scope" value="Eukaryota"/>
</dbReference>
<dbReference type="GeneTree" id="ENSGT00940000176336"/>
<dbReference type="HOGENOM" id="CLU_013748_0_2_1"/>
<dbReference type="InParanoid" id="P26263"/>
<dbReference type="OMA" id="YPNVRMK"/>
<dbReference type="OrthoDB" id="3970464at2759"/>
<dbReference type="BioCyc" id="MetaCyc:YGR087C-MONOMER"/>
<dbReference type="BioCyc" id="YEAST:YGR087C-MONOMER"/>
<dbReference type="BRENDA" id="4.1.1.1">
    <property type="organism ID" value="984"/>
</dbReference>
<dbReference type="SABIO-RK" id="P26263"/>
<dbReference type="UniPathway" id="UPA00206"/>
<dbReference type="UniPathway" id="UPA00866"/>
<dbReference type="BioGRID-ORCS" id="852978">
    <property type="hits" value="1 hit in 10 CRISPR screens"/>
</dbReference>
<dbReference type="PRO" id="PR:P26263"/>
<dbReference type="Proteomes" id="UP000002311">
    <property type="component" value="Chromosome VII"/>
</dbReference>
<dbReference type="RNAct" id="P26263">
    <property type="molecule type" value="protein"/>
</dbReference>
<dbReference type="GO" id="GO:0005737">
    <property type="term" value="C:cytoplasm"/>
    <property type="evidence" value="ECO:0007005"/>
    <property type="project" value="SGD"/>
</dbReference>
<dbReference type="GO" id="GO:0005829">
    <property type="term" value="C:cytosol"/>
    <property type="evidence" value="ECO:0000318"/>
    <property type="project" value="GO_Central"/>
</dbReference>
<dbReference type="GO" id="GO:0005634">
    <property type="term" value="C:nucleus"/>
    <property type="evidence" value="ECO:0000318"/>
    <property type="project" value="GO_Central"/>
</dbReference>
<dbReference type="GO" id="GO:0047433">
    <property type="term" value="F:branched-chain-2-oxoacid decarboxylase activity"/>
    <property type="evidence" value="ECO:0007669"/>
    <property type="project" value="UniProtKB-EC"/>
</dbReference>
<dbReference type="GO" id="GO:0047434">
    <property type="term" value="F:indolepyruvate decarboxylase activity"/>
    <property type="evidence" value="ECO:0007669"/>
    <property type="project" value="UniProtKB-EC"/>
</dbReference>
<dbReference type="GO" id="GO:0000287">
    <property type="term" value="F:magnesium ion binding"/>
    <property type="evidence" value="ECO:0007669"/>
    <property type="project" value="InterPro"/>
</dbReference>
<dbReference type="GO" id="GO:0050177">
    <property type="term" value="F:phenylpyruvate decarboxylase activity"/>
    <property type="evidence" value="ECO:0007669"/>
    <property type="project" value="UniProtKB-EC"/>
</dbReference>
<dbReference type="GO" id="GO:0004737">
    <property type="term" value="F:pyruvate decarboxylase activity"/>
    <property type="evidence" value="ECO:0000314"/>
    <property type="project" value="SGD"/>
</dbReference>
<dbReference type="GO" id="GO:0030976">
    <property type="term" value="F:thiamine pyrophosphate binding"/>
    <property type="evidence" value="ECO:0007669"/>
    <property type="project" value="InterPro"/>
</dbReference>
<dbReference type="GO" id="GO:0000949">
    <property type="term" value="P:aromatic amino acid family catabolic process to alcohol via Ehrlich pathway"/>
    <property type="evidence" value="ECO:0000316"/>
    <property type="project" value="SGD"/>
</dbReference>
<dbReference type="GO" id="GO:0009083">
    <property type="term" value="P:branched-chain amino acid catabolic process"/>
    <property type="evidence" value="ECO:0007669"/>
    <property type="project" value="UniProtKB-KW"/>
</dbReference>
<dbReference type="GO" id="GO:0006067">
    <property type="term" value="P:ethanol metabolic process"/>
    <property type="evidence" value="ECO:0000315"/>
    <property type="project" value="SGD"/>
</dbReference>
<dbReference type="GO" id="GO:0006559">
    <property type="term" value="P:L-phenylalanine catabolic process"/>
    <property type="evidence" value="ECO:0000316"/>
    <property type="project" value="SGD"/>
</dbReference>
<dbReference type="GO" id="GO:0006569">
    <property type="term" value="P:L-tryptophan catabolic process"/>
    <property type="evidence" value="ECO:0000316"/>
    <property type="project" value="SGD"/>
</dbReference>
<dbReference type="CDD" id="cd02005">
    <property type="entry name" value="TPP_PDC_IPDC"/>
    <property type="match status" value="1"/>
</dbReference>
<dbReference type="CDD" id="cd07038">
    <property type="entry name" value="TPP_PYR_PDC_IPDC_like"/>
    <property type="match status" value="1"/>
</dbReference>
<dbReference type="FunFam" id="3.40.50.1220:FF:000018">
    <property type="entry name" value="Pyruvate decarboxylase isozyme"/>
    <property type="match status" value="1"/>
</dbReference>
<dbReference type="FunFam" id="3.40.50.970:FF:000019">
    <property type="entry name" value="Pyruvate decarboxylase isozyme"/>
    <property type="match status" value="1"/>
</dbReference>
<dbReference type="FunFam" id="3.40.50.970:FF:000024">
    <property type="entry name" value="Pyruvate decarboxylase isozyme"/>
    <property type="match status" value="1"/>
</dbReference>
<dbReference type="Gene3D" id="3.40.50.970">
    <property type="match status" value="2"/>
</dbReference>
<dbReference type="Gene3D" id="3.40.50.1220">
    <property type="entry name" value="TPP-binding domain"/>
    <property type="match status" value="1"/>
</dbReference>
<dbReference type="InterPro" id="IPR029035">
    <property type="entry name" value="DHS-like_NAD/FAD-binding_dom"/>
</dbReference>
<dbReference type="InterPro" id="IPR012110">
    <property type="entry name" value="PDC/IPDC-like"/>
</dbReference>
<dbReference type="InterPro" id="IPR029061">
    <property type="entry name" value="THDP-binding"/>
</dbReference>
<dbReference type="InterPro" id="IPR012000">
    <property type="entry name" value="Thiamin_PyroP_enz_cen_dom"/>
</dbReference>
<dbReference type="InterPro" id="IPR012001">
    <property type="entry name" value="Thiamin_PyroP_enz_TPP-bd_dom"/>
</dbReference>
<dbReference type="InterPro" id="IPR000399">
    <property type="entry name" value="TPP-bd_CS"/>
</dbReference>
<dbReference type="InterPro" id="IPR011766">
    <property type="entry name" value="TPP_enzyme_TPP-bd"/>
</dbReference>
<dbReference type="InterPro" id="IPR047214">
    <property type="entry name" value="TPP_PDC_IPDC"/>
</dbReference>
<dbReference type="InterPro" id="IPR047213">
    <property type="entry name" value="TPP_PYR_PDC_IPDC-like"/>
</dbReference>
<dbReference type="PANTHER" id="PTHR43452">
    <property type="entry name" value="PYRUVATE DECARBOXYLASE"/>
    <property type="match status" value="1"/>
</dbReference>
<dbReference type="PANTHER" id="PTHR43452:SF30">
    <property type="entry name" value="PYRUVATE DECARBOXYLASE ISOZYME 1-RELATED"/>
    <property type="match status" value="1"/>
</dbReference>
<dbReference type="Pfam" id="PF02775">
    <property type="entry name" value="TPP_enzyme_C"/>
    <property type="match status" value="1"/>
</dbReference>
<dbReference type="Pfam" id="PF00205">
    <property type="entry name" value="TPP_enzyme_M"/>
    <property type="match status" value="1"/>
</dbReference>
<dbReference type="Pfam" id="PF02776">
    <property type="entry name" value="TPP_enzyme_N"/>
    <property type="match status" value="1"/>
</dbReference>
<dbReference type="PIRSF" id="PIRSF036565">
    <property type="entry name" value="Pyruvt_ip_decrb"/>
    <property type="match status" value="1"/>
</dbReference>
<dbReference type="SUPFAM" id="SSF52467">
    <property type="entry name" value="DHS-like NAD/FAD-binding domain"/>
    <property type="match status" value="1"/>
</dbReference>
<dbReference type="SUPFAM" id="SSF52518">
    <property type="entry name" value="Thiamin diphosphate-binding fold (THDP-binding)"/>
    <property type="match status" value="2"/>
</dbReference>
<dbReference type="PROSITE" id="PS00187">
    <property type="entry name" value="TPP_ENZYMES"/>
    <property type="match status" value="1"/>
</dbReference>
<name>PDC6_YEAST</name>
<comment type="function">
    <text evidence="3 4 5 6 7 11 13 15">Minor of three pyruvate decarboxylases (PDC1, PDC5, PDC6) implicated in the nonoxidative conversion of pyruvate to acetaldehyde and carbon dioxide during alcoholic fermentation. Most of the produced acetaldehyde is subsequently reduced to ethanol, but some is required for cytosolic acetyl-CoA production for biosynthetic pathways. The enzyme is also one of five 2-oxo acid decarboxylases (PDC1, PDC5, PDC6, ARO10, and THI3) able to decarboxylate more complex 2-oxo acids (alpha-keto-acids) than pyruvate, which seem mainly involved in amino acid catabolism. Here the enzyme catalyzes the decarboxylation of amino acids, which, in a first step, have been transaminated to the corresponding 2-oxo acids. In a third step, the resulting aldehydes are reduced to alcohols, collectively referred to as fusel oils or alcohols. Its preferred substrates are the transaminated amino acids derived from threonine (2-oxobutanoate), norvaline (2-oxopentanoate), valine (3-methyl-2-oxobutanoate, also alpha-keto-isovalerate), isoleucine ((3S)-3-methyl-2-oxopentanoate, also alpha-keto-beta-methylvalerate), phenylalanine (phenylpyruvate), and tryptophan (3-(indol-3-yl)pyruvate), whereas transaminated leucine is no substrate. In a side-reaction the carbanionic intermediate (or active aldehyde) generated by decarboxylation or by activation of an aldehyde can react with an aldehyde via condensation (or carboligation) yielding a 2-hydroxy ketone, collectively called acyloins. The expression level of this protein in the presence of fermentable carbon sources is so low that it cannot compensate for the other two pyruvate decarboxylases to sustain fermentation.</text>
</comment>
<comment type="catalytic activity">
    <reaction evidence="10">
        <text>pyruvate + H(+) = acetaldehyde + CO2</text>
        <dbReference type="Rhea" id="RHEA:45484"/>
        <dbReference type="ChEBI" id="CHEBI:15343"/>
        <dbReference type="ChEBI" id="CHEBI:15361"/>
        <dbReference type="ChEBI" id="CHEBI:15378"/>
        <dbReference type="ChEBI" id="CHEBI:16526"/>
    </reaction>
</comment>
<comment type="catalytic activity">
    <reaction evidence="15">
        <text>3-methyl-2-oxobutanoate + H(+) = 2-methylpropanal + CO2</text>
        <dbReference type="Rhea" id="RHEA:54356"/>
        <dbReference type="ChEBI" id="CHEBI:11851"/>
        <dbReference type="ChEBI" id="CHEBI:15378"/>
        <dbReference type="ChEBI" id="CHEBI:16526"/>
        <dbReference type="ChEBI" id="CHEBI:48943"/>
        <dbReference type="EC" id="4.1.1.72"/>
    </reaction>
</comment>
<comment type="catalytic activity">
    <reaction evidence="4">
        <text>(S)-3-methyl-2-oxopentanoate + H(+) = 2-methylbutanal + CO2</text>
        <dbReference type="Rhea" id="RHEA:21108"/>
        <dbReference type="ChEBI" id="CHEBI:15378"/>
        <dbReference type="ChEBI" id="CHEBI:16182"/>
        <dbReference type="ChEBI" id="CHEBI:16526"/>
        <dbReference type="ChEBI" id="CHEBI:35146"/>
        <dbReference type="EC" id="4.1.1.72"/>
    </reaction>
</comment>
<comment type="catalytic activity">
    <reaction evidence="6">
        <text>indole-3-pyruvate + H(+) = indole-3-acetaldehyde + CO2</text>
        <dbReference type="Rhea" id="RHEA:18017"/>
        <dbReference type="ChEBI" id="CHEBI:15378"/>
        <dbReference type="ChEBI" id="CHEBI:16526"/>
        <dbReference type="ChEBI" id="CHEBI:17640"/>
        <dbReference type="ChEBI" id="CHEBI:18086"/>
        <dbReference type="EC" id="4.1.1.74"/>
    </reaction>
</comment>
<comment type="catalytic activity">
    <reaction evidence="6">
        <text>3-phenylpyruvate + H(+) = 2-phenylacetaldehyde + CO2</text>
        <dbReference type="Rhea" id="RHEA:14185"/>
        <dbReference type="ChEBI" id="CHEBI:15378"/>
        <dbReference type="ChEBI" id="CHEBI:16424"/>
        <dbReference type="ChEBI" id="CHEBI:16526"/>
        <dbReference type="ChEBI" id="CHEBI:18005"/>
        <dbReference type="EC" id="4.1.1.43"/>
    </reaction>
</comment>
<comment type="catalytic activity">
    <reaction evidence="11">
        <text>2-oxobutanoate + H(+) = propanal + CO2</text>
        <dbReference type="Rhea" id="RHEA:55072"/>
        <dbReference type="ChEBI" id="CHEBI:15378"/>
        <dbReference type="ChEBI" id="CHEBI:16526"/>
        <dbReference type="ChEBI" id="CHEBI:16763"/>
        <dbReference type="ChEBI" id="CHEBI:17153"/>
    </reaction>
</comment>
<comment type="catalytic activity">
    <reaction evidence="11 12">
        <text>2-oxopentanoate + H(+) = butanal + CO2</text>
        <dbReference type="Rhea" id="RHEA:50312"/>
        <dbReference type="ChEBI" id="CHEBI:15378"/>
        <dbReference type="ChEBI" id="CHEBI:15743"/>
        <dbReference type="ChEBI" id="CHEBI:16526"/>
        <dbReference type="ChEBI" id="CHEBI:28644"/>
    </reaction>
</comment>
<comment type="catalytic activity">
    <reaction evidence="5 17">
        <text>2 acetaldehyde = acetoin</text>
        <dbReference type="Rhea" id="RHEA:54364"/>
        <dbReference type="ChEBI" id="CHEBI:15343"/>
        <dbReference type="ChEBI" id="CHEBI:15688"/>
    </reaction>
</comment>
<comment type="catalytic activity">
    <reaction evidence="5 17">
        <text>acetaldehyde + pyruvate + H(+) = acetoin + CO2</text>
        <dbReference type="Rhea" id="RHEA:54368"/>
        <dbReference type="ChEBI" id="CHEBI:15343"/>
        <dbReference type="ChEBI" id="CHEBI:15361"/>
        <dbReference type="ChEBI" id="CHEBI:15378"/>
        <dbReference type="ChEBI" id="CHEBI:15688"/>
        <dbReference type="ChEBI" id="CHEBI:16526"/>
    </reaction>
</comment>
<comment type="cofactor">
    <cofactor evidence="2">
        <name>Mg(2+)</name>
        <dbReference type="ChEBI" id="CHEBI:18420"/>
    </cofactor>
    <text evidence="2">Binds 1 Mg(2+) per subunit.</text>
</comment>
<comment type="cofactor">
    <cofactor evidence="2">
        <name>thiamine diphosphate</name>
        <dbReference type="ChEBI" id="CHEBI:58937"/>
    </cofactor>
    <text evidence="2">Binds 1 thiamine pyrophosphate per subunit.</text>
</comment>
<comment type="biophysicochemical properties">
    <kinetics>
        <KM evidence="11">2.9 mM for pyruvate</KM>
        <KM evidence="11">1 mM for 2-oxobutanoate</KM>
        <KM evidence="11">1.6 mM for 2-oxopentanoate</KM>
        <Vmax evidence="11">1.5 umol/min/mg enzyme for pyruvate</Vmax>
        <Vmax evidence="11">0.5 umol/min/mg enzyme for 2-oxobutanoate</Vmax>
        <Vmax evidence="11">0.4 umol/min/mg enzyme for 2-oxopentanoate</Vmax>
        <Vmax evidence="11">31.0 umol/min/mg enzyme for 3-methyl-2-oxobutanoate</Vmax>
        <Vmax evidence="11">19.0 umol/min/mg enzyme for 4-methyl-2-oxopentanoate</Vmax>
        <Vmax evidence="11">10.0 umol/min/mg enzyme for 3-methyl-2-oxopentanoate</Vmax>
        <Vmax evidence="11">51.0 umol/min/mg enzyme for 4-methylthio-2-oxobutanoate</Vmax>
    </kinetics>
</comment>
<comment type="pathway">
    <text>Fermentation; ethanol fermentation.</text>
</comment>
<comment type="pathway">
    <text>Amino-acid degradation; Ehrlich pathway.</text>
</comment>
<comment type="subunit">
    <text evidence="1">Homotetramer.</text>
</comment>
<comment type="subcellular location">
    <subcellularLocation>
        <location evidence="8">Cytoplasm</location>
    </subcellularLocation>
</comment>
<comment type="induction">
    <text>Expression is very low in the presence of fermentable carbon sources, but is induced, in contrast to PDC5, by ethanol.</text>
</comment>
<comment type="biotechnology">
    <text evidence="14">Fusel oils and acyloins are important flavor and aroma compounds in yeast-fermented products contributing to the quality of beverages and food, e.g. fusel oils in whiskey, contrary to common believe, seem to alleviate hangover. In general they are desirable at low concentrations, whereas high concentrations may spoil the product. By adjusting growth conditions and substrate their production is sought to be influenced. Due to their broad substrate tolerance pyruvate decarboxylases are important biocatalysts for chemoenzymatic syntheses, both by fermentation and in vitro, e.g. in the production of ephedrine, vitamin E, or phenylethanol (rose flavor).</text>
</comment>
<comment type="miscellaneous">
    <text evidence="9">Present with 1525 molecules/cell in log phase SD medium.</text>
</comment>
<comment type="similarity">
    <text evidence="16">Belongs to the TPP enzyme family.</text>
</comment>